<name>TCAM2_MOUSE</name>
<feature type="initiator methionine" description="Removed" evidence="2">
    <location>
        <position position="1"/>
    </location>
</feature>
<feature type="chain" id="PRO_0000317690" description="TIR domain-containing adapter molecule 2">
    <location>
        <begin position="2"/>
        <end position="232"/>
    </location>
</feature>
<feature type="domain" description="TIR" evidence="3">
    <location>
        <begin position="74"/>
        <end position="226"/>
    </location>
</feature>
<feature type="region of interest" description="Disordered" evidence="4">
    <location>
        <begin position="1"/>
        <end position="70"/>
    </location>
</feature>
<feature type="compositionally biased region" description="Basic and acidic residues" evidence="4">
    <location>
        <begin position="1"/>
        <end position="39"/>
    </location>
</feature>
<feature type="modified residue" description="Phosphotyrosine" evidence="2">
    <location>
        <position position="164"/>
    </location>
</feature>
<feature type="lipid moiety-binding region" description="N-myristoyl glycine" evidence="2">
    <location>
        <position position="2"/>
    </location>
</feature>
<feature type="mutagenesis site" description="Results in relocalization from membrane to cytosol; impairs ability to promote LPS-induced IL6 and CCL5 production." evidence="6">
    <original>G</original>
    <variation>A</variation>
    <location>
        <position position="2"/>
    </location>
</feature>
<feature type="mutagenesis site" description="Results in exclusive localization to early endosomes and no effect on ability to promote LPS-induced IL6 and CCL5 production; when associated with E-15 and E-17." evidence="6">
    <original>K</original>
    <variation>E</variation>
    <location>
        <position position="7"/>
    </location>
</feature>
<feature type="mutagenesis site" description="Results in exclusive localization to early endosomes and no effect on ability to promote LPS-induced IL6 and CCL5 production; when associated with E-7 and E-17." evidence="6">
    <original>W</original>
    <variation>E</variation>
    <location>
        <position position="15"/>
    </location>
</feature>
<feature type="mutagenesis site" description="Results in exclusive localization to early endosomes and no effect on ability to promote LPS-induced IL6 and CCL5 production; when associated with E-7 and E-15." evidence="6">
    <original>K</original>
    <variation>E</variation>
    <location>
        <position position="17"/>
    </location>
</feature>
<feature type="sequence conflict" description="In Ref. 5; BAE30771." evidence="8" ref="5">
    <original>A</original>
    <variation>T</variation>
    <location>
        <position position="185"/>
    </location>
</feature>
<dbReference type="EMBL" id="AB100441">
    <property type="protein sequence ID" value="BAC98398.1"/>
    <property type="molecule type" value="mRNA"/>
</dbReference>
<dbReference type="EMBL" id="AY275837">
    <property type="protein sequence ID" value="AAP81749.1"/>
    <property type="molecule type" value="mRNA"/>
</dbReference>
<dbReference type="EMBL" id="AY268050">
    <property type="protein sequence ID" value="AAP29979.1"/>
    <property type="molecule type" value="mRNA"/>
</dbReference>
<dbReference type="EMBL" id="AK080873">
    <property type="protein sequence ID" value="BAC38055.1"/>
    <property type="molecule type" value="mRNA"/>
</dbReference>
<dbReference type="EMBL" id="AK151885">
    <property type="protein sequence ID" value="BAE30771.1"/>
    <property type="molecule type" value="mRNA"/>
</dbReference>
<dbReference type="EMBL" id="AK134103">
    <property type="protein sequence ID" value="BAE22014.1"/>
    <property type="molecule type" value="mRNA"/>
</dbReference>
<dbReference type="EMBL" id="BC099933">
    <property type="protein sequence ID" value="AAH99933.1"/>
    <property type="molecule type" value="mRNA"/>
</dbReference>
<dbReference type="CCDS" id="CCDS29232.1"/>
<dbReference type="RefSeq" id="NP_775570.1">
    <property type="nucleotide sequence ID" value="NM_173394.3"/>
</dbReference>
<dbReference type="SMR" id="Q8BJQ4"/>
<dbReference type="BioGRID" id="230399">
    <property type="interactions" value="7"/>
</dbReference>
<dbReference type="CORUM" id="Q8BJQ4"/>
<dbReference type="FunCoup" id="Q8BJQ4">
    <property type="interactions" value="276"/>
</dbReference>
<dbReference type="IntAct" id="Q8BJQ4">
    <property type="interactions" value="1"/>
</dbReference>
<dbReference type="STRING" id="10090.ENSMUSP00000066239"/>
<dbReference type="iPTMnet" id="Q8BJQ4"/>
<dbReference type="PhosphoSitePlus" id="Q8BJQ4"/>
<dbReference type="PaxDb" id="10090-ENSMUSP00000066239"/>
<dbReference type="ProteomicsDB" id="263087"/>
<dbReference type="DNASU" id="225471"/>
<dbReference type="Ensembl" id="ENSMUST00000070084.11">
    <property type="protein sequence ID" value="ENSMUSP00000066239.4"/>
    <property type="gene ID" value="ENSMUSG00000056130.11"/>
</dbReference>
<dbReference type="GeneID" id="225471"/>
<dbReference type="KEGG" id="mmu:225471"/>
<dbReference type="UCSC" id="uc008evp.2">
    <property type="organism name" value="mouse"/>
</dbReference>
<dbReference type="AGR" id="MGI:3040056"/>
<dbReference type="CTD" id="353376"/>
<dbReference type="MGI" id="MGI:3040056">
    <property type="gene designation" value="Ticam2"/>
</dbReference>
<dbReference type="VEuPathDB" id="HostDB:ENSMUSG00000056130"/>
<dbReference type="eggNOG" id="ENOG502S2I6">
    <property type="taxonomic scope" value="Eukaryota"/>
</dbReference>
<dbReference type="GeneTree" id="ENSGT00940000164712"/>
<dbReference type="HOGENOM" id="CLU_094608_0_0_1"/>
<dbReference type="InParanoid" id="Q8BJQ4"/>
<dbReference type="OMA" id="YCIKPGI"/>
<dbReference type="OrthoDB" id="62956at2759"/>
<dbReference type="PhylomeDB" id="Q8BJQ4"/>
<dbReference type="TreeFam" id="TF336953"/>
<dbReference type="Reactome" id="R-MMU-140534">
    <property type="pathway name" value="Caspase activation via Death Receptors in the presence of ligand"/>
</dbReference>
<dbReference type="Reactome" id="R-MMU-166016">
    <property type="pathway name" value="Toll Like Receptor 4 (TLR4) Cascade"/>
</dbReference>
<dbReference type="Reactome" id="R-MMU-166166">
    <property type="pathway name" value="MyD88-independent TLR4 cascade"/>
</dbReference>
<dbReference type="Reactome" id="R-MMU-2562578">
    <property type="pathway name" value="TRIF-mediated programmed cell death"/>
</dbReference>
<dbReference type="Reactome" id="R-MMU-6798695">
    <property type="pathway name" value="Neutrophil degranulation"/>
</dbReference>
<dbReference type="Reactome" id="R-MMU-936964">
    <property type="pathway name" value="Activation of IRF3, IRF7 mediated by TBK1, IKKEpsilon (IKBKE)"/>
</dbReference>
<dbReference type="Reactome" id="R-MMU-937041">
    <property type="pathway name" value="IKK complex recruitment mediated by RIP1"/>
</dbReference>
<dbReference type="Reactome" id="R-MMU-937072">
    <property type="pathway name" value="TRAF6-mediated induction of TAK1 complex within TLR4 complex"/>
</dbReference>
<dbReference type="Reactome" id="R-MMU-975163">
    <property type="pathway name" value="IRAK2 mediated activation of TAK1 complex upon TLR7/8 or 9 stimulation"/>
</dbReference>
<dbReference type="Reactome" id="R-MMU-9824878">
    <property type="pathway name" value="Regulation of TBK1, IKKEpsilon (IKBKE)-mediated activation of IRF3, IRF7"/>
</dbReference>
<dbReference type="BioGRID-ORCS" id="225471">
    <property type="hits" value="0 hits in 76 CRISPR screens"/>
</dbReference>
<dbReference type="ChiTaRS" id="Ticam2">
    <property type="organism name" value="mouse"/>
</dbReference>
<dbReference type="PRO" id="PR:Q8BJQ4"/>
<dbReference type="Proteomes" id="UP000000589">
    <property type="component" value="Chromosome 18"/>
</dbReference>
<dbReference type="RNAct" id="Q8BJQ4">
    <property type="molecule type" value="protein"/>
</dbReference>
<dbReference type="Bgee" id="ENSMUSG00000056130">
    <property type="expression patterns" value="Expressed in ureter and 42 other cell types or tissues"/>
</dbReference>
<dbReference type="GO" id="GO:0042995">
    <property type="term" value="C:cell projection"/>
    <property type="evidence" value="ECO:0007669"/>
    <property type="project" value="UniProtKB-KW"/>
</dbReference>
<dbReference type="GO" id="GO:0005769">
    <property type="term" value="C:early endosome"/>
    <property type="evidence" value="ECO:0000250"/>
    <property type="project" value="UniProtKB"/>
</dbReference>
<dbReference type="GO" id="GO:0005783">
    <property type="term" value="C:endoplasmic reticulum"/>
    <property type="evidence" value="ECO:0000250"/>
    <property type="project" value="UniProtKB"/>
</dbReference>
<dbReference type="GO" id="GO:0005768">
    <property type="term" value="C:endosome"/>
    <property type="evidence" value="ECO:0000314"/>
    <property type="project" value="UniProtKB"/>
</dbReference>
<dbReference type="GO" id="GO:0005794">
    <property type="term" value="C:Golgi apparatus"/>
    <property type="evidence" value="ECO:0007669"/>
    <property type="project" value="UniProtKB-SubCell"/>
</dbReference>
<dbReference type="GO" id="GO:0045323">
    <property type="term" value="C:interleukin-1 receptor complex"/>
    <property type="evidence" value="ECO:0000266"/>
    <property type="project" value="MGI"/>
</dbReference>
<dbReference type="GO" id="GO:0005770">
    <property type="term" value="C:late endosome"/>
    <property type="evidence" value="ECO:0000250"/>
    <property type="project" value="UniProtKB"/>
</dbReference>
<dbReference type="GO" id="GO:0001891">
    <property type="term" value="C:phagocytic cup"/>
    <property type="evidence" value="ECO:0007669"/>
    <property type="project" value="UniProtKB-SubCell"/>
</dbReference>
<dbReference type="GO" id="GO:0005886">
    <property type="term" value="C:plasma membrane"/>
    <property type="evidence" value="ECO:0000314"/>
    <property type="project" value="UniProtKB"/>
</dbReference>
<dbReference type="GO" id="GO:0005149">
    <property type="term" value="F:interleukin-1 receptor binding"/>
    <property type="evidence" value="ECO:0000266"/>
    <property type="project" value="MGI"/>
</dbReference>
<dbReference type="GO" id="GO:0005543">
    <property type="term" value="F:phospholipid binding"/>
    <property type="evidence" value="ECO:0000314"/>
    <property type="project" value="UniProtKB"/>
</dbReference>
<dbReference type="GO" id="GO:0046982">
    <property type="term" value="F:protein heterodimerization activity"/>
    <property type="evidence" value="ECO:0000266"/>
    <property type="project" value="MGI"/>
</dbReference>
<dbReference type="GO" id="GO:0071222">
    <property type="term" value="P:cellular response to lipopolysaccharide"/>
    <property type="evidence" value="ECO:0000250"/>
    <property type="project" value="UniProtKB"/>
</dbReference>
<dbReference type="GO" id="GO:0051607">
    <property type="term" value="P:defense response to virus"/>
    <property type="evidence" value="ECO:0000315"/>
    <property type="project" value="MGI"/>
</dbReference>
<dbReference type="GO" id="GO:0006954">
    <property type="term" value="P:inflammatory response"/>
    <property type="evidence" value="ECO:0007669"/>
    <property type="project" value="UniProtKB-KW"/>
</dbReference>
<dbReference type="GO" id="GO:0045087">
    <property type="term" value="P:innate immune response"/>
    <property type="evidence" value="ECO:0007669"/>
    <property type="project" value="UniProtKB-KW"/>
</dbReference>
<dbReference type="GO" id="GO:0006909">
    <property type="term" value="P:phagocytosis"/>
    <property type="evidence" value="ECO:0000315"/>
    <property type="project" value="UniProtKB"/>
</dbReference>
<dbReference type="GO" id="GO:0071651">
    <property type="term" value="P:positive regulation of chemokine (C-C motif) ligand 5 production"/>
    <property type="evidence" value="ECO:0000314"/>
    <property type="project" value="UniProtKB"/>
</dbReference>
<dbReference type="GO" id="GO:2000494">
    <property type="term" value="P:positive regulation of interleukin-18-mediated signaling pathway"/>
    <property type="evidence" value="ECO:0000315"/>
    <property type="project" value="UniProtKB"/>
</dbReference>
<dbReference type="GO" id="GO:0032755">
    <property type="term" value="P:positive regulation of interleukin-6 production"/>
    <property type="evidence" value="ECO:0000314"/>
    <property type="project" value="UniProtKB"/>
</dbReference>
<dbReference type="GO" id="GO:0034145">
    <property type="term" value="P:positive regulation of toll-like receptor 4 signaling pathway"/>
    <property type="evidence" value="ECO:0000250"/>
    <property type="project" value="UniProtKB"/>
</dbReference>
<dbReference type="GO" id="GO:0032729">
    <property type="term" value="P:positive regulation of type II interferon production"/>
    <property type="evidence" value="ECO:0000315"/>
    <property type="project" value="UniProtKB"/>
</dbReference>
<dbReference type="GO" id="GO:0043122">
    <property type="term" value="P:regulation of canonical NF-kappaB signal transduction"/>
    <property type="evidence" value="ECO:0000266"/>
    <property type="project" value="MGI"/>
</dbReference>
<dbReference type="GO" id="GO:0001817">
    <property type="term" value="P:regulation of cytokine production"/>
    <property type="evidence" value="ECO:0000315"/>
    <property type="project" value="MGI"/>
</dbReference>
<dbReference type="GO" id="GO:0070671">
    <property type="term" value="P:response to interleukin-12"/>
    <property type="evidence" value="ECO:0000315"/>
    <property type="project" value="UniProtKB"/>
</dbReference>
<dbReference type="GO" id="GO:0035669">
    <property type="term" value="P:TRAM-dependent toll-like receptor 4 signaling pathway"/>
    <property type="evidence" value="ECO:0000250"/>
    <property type="project" value="UniProtKB"/>
</dbReference>
<dbReference type="GO" id="GO:0035666">
    <property type="term" value="P:TRIF-dependent toll-like receptor signaling pathway"/>
    <property type="evidence" value="ECO:0007669"/>
    <property type="project" value="InterPro"/>
</dbReference>
<dbReference type="FunFam" id="3.40.50.10140:FF:000014">
    <property type="entry name" value="TIR domain-containing adapter molecule 2"/>
    <property type="match status" value="1"/>
</dbReference>
<dbReference type="Gene3D" id="3.40.50.10140">
    <property type="entry name" value="Toll/interleukin-1 receptor homology (TIR) domain"/>
    <property type="match status" value="1"/>
</dbReference>
<dbReference type="InterPro" id="IPR046946">
    <property type="entry name" value="TCAM1/2"/>
</dbReference>
<dbReference type="InterPro" id="IPR000157">
    <property type="entry name" value="TIR_dom"/>
</dbReference>
<dbReference type="InterPro" id="IPR035897">
    <property type="entry name" value="Toll_tir_struct_dom_sf"/>
</dbReference>
<dbReference type="PANTHER" id="PTHR47230">
    <property type="entry name" value="TIR DOMAIN-CONTAINING ADAPTER MOLECULE 1"/>
    <property type="match status" value="1"/>
</dbReference>
<dbReference type="PANTHER" id="PTHR47230:SF2">
    <property type="entry name" value="TIR DOMAIN-CONTAINING ADAPTER MOLECULE 2"/>
    <property type="match status" value="1"/>
</dbReference>
<dbReference type="Pfam" id="PF13676">
    <property type="entry name" value="TIR_2"/>
    <property type="match status" value="1"/>
</dbReference>
<dbReference type="SUPFAM" id="SSF52200">
    <property type="entry name" value="Toll/Interleukin receptor TIR domain"/>
    <property type="match status" value="1"/>
</dbReference>
<dbReference type="PROSITE" id="PS50104">
    <property type="entry name" value="TIR"/>
    <property type="match status" value="1"/>
</dbReference>
<organism>
    <name type="scientific">Mus musculus</name>
    <name type="common">Mouse</name>
    <dbReference type="NCBI Taxonomy" id="10090"/>
    <lineage>
        <taxon>Eukaryota</taxon>
        <taxon>Metazoa</taxon>
        <taxon>Chordata</taxon>
        <taxon>Craniata</taxon>
        <taxon>Vertebrata</taxon>
        <taxon>Euteleostomi</taxon>
        <taxon>Mammalia</taxon>
        <taxon>Eutheria</taxon>
        <taxon>Euarchontoglires</taxon>
        <taxon>Glires</taxon>
        <taxon>Rodentia</taxon>
        <taxon>Myomorpha</taxon>
        <taxon>Muroidea</taxon>
        <taxon>Muridae</taxon>
        <taxon>Murinae</taxon>
        <taxon>Mus</taxon>
        <taxon>Mus</taxon>
    </lineage>
</organism>
<evidence type="ECO:0000250" key="1"/>
<evidence type="ECO:0000250" key="2">
    <source>
        <dbReference type="UniProtKB" id="Q86XR7"/>
    </source>
</evidence>
<evidence type="ECO:0000255" key="3">
    <source>
        <dbReference type="PROSITE-ProRule" id="PRU00204"/>
    </source>
</evidence>
<evidence type="ECO:0000256" key="4">
    <source>
        <dbReference type="SAM" id="MobiDB-lite"/>
    </source>
</evidence>
<evidence type="ECO:0000269" key="5">
    <source>
    </source>
</evidence>
<evidence type="ECO:0000269" key="6">
    <source>
    </source>
</evidence>
<evidence type="ECO:0000269" key="7">
    <source>
    </source>
</evidence>
<evidence type="ECO:0000305" key="8"/>
<reference key="1">
    <citation type="journal article" date="2003" name="J. Biol. Chem.">
        <title>TIRP, a novel Toll/interleukin-1 receptor (TIR) domain-containing adapter protein involved in TIR signaling.</title>
        <authorList>
            <person name="Bin L.-H."/>
            <person name="Xu L.-G."/>
            <person name="Shu H.-B."/>
        </authorList>
    </citation>
    <scope>NUCLEOTIDE SEQUENCE [MRNA]</scope>
</reference>
<reference key="2">
    <citation type="journal article" date="2003" name="J. Biol. Chem.">
        <title>TIR-containing adapter molecule (TICAM)-2, a bridging adapter recruiting to toll-like receptor 4 TICAM-1 that induces interferon-beta.</title>
        <authorList>
            <person name="Oshiumi H."/>
            <person name="Sasai M."/>
            <person name="Shida K."/>
            <person name="Fujita T."/>
            <person name="Matsumoto M."/>
            <person name="Seya T."/>
        </authorList>
    </citation>
    <scope>NUCLEOTIDE SEQUENCE [MRNA]</scope>
</reference>
<reference key="3">
    <citation type="journal article" date="2003" name="J. Exp. Med.">
        <title>LPS-TLR4 signaling to IRF-3/7 and NF-kappaB involves the toll adapters TRAM and TRIF.</title>
        <authorList>
            <person name="Fitzgerald K.A."/>
            <person name="Rowe D.C."/>
            <person name="Barnes B.J."/>
            <person name="Caffrey D.R."/>
            <person name="Visintin A."/>
            <person name="Latz E."/>
            <person name="Monks B."/>
            <person name="Pitha P.M."/>
            <person name="Golenbock D.T."/>
        </authorList>
    </citation>
    <scope>NUCLEOTIDE SEQUENCE [MRNA]</scope>
</reference>
<reference key="4">
    <citation type="journal article" date="2003" name="J. Exp. Med.">
        <authorList>
            <person name="Fitzgerald K.A."/>
            <person name="Rowe D.C."/>
            <person name="Barnes B.J."/>
            <person name="Caffrey D.R."/>
            <person name="Visintin A."/>
            <person name="Latz E."/>
            <person name="Monks B."/>
            <person name="Pitha P.M."/>
            <person name="Golenbock D.T."/>
        </authorList>
    </citation>
    <scope>ERRATUM OF PUBMED:14517278</scope>
</reference>
<reference key="5">
    <citation type="journal article" date="2005" name="Science">
        <title>The transcriptional landscape of the mammalian genome.</title>
        <authorList>
            <person name="Carninci P."/>
            <person name="Kasukawa T."/>
            <person name="Katayama S."/>
            <person name="Gough J."/>
            <person name="Frith M.C."/>
            <person name="Maeda N."/>
            <person name="Oyama R."/>
            <person name="Ravasi T."/>
            <person name="Lenhard B."/>
            <person name="Wells C."/>
            <person name="Kodzius R."/>
            <person name="Shimokawa K."/>
            <person name="Bajic V.B."/>
            <person name="Brenner S.E."/>
            <person name="Batalov S."/>
            <person name="Forrest A.R."/>
            <person name="Zavolan M."/>
            <person name="Davis M.J."/>
            <person name="Wilming L.G."/>
            <person name="Aidinis V."/>
            <person name="Allen J.E."/>
            <person name="Ambesi-Impiombato A."/>
            <person name="Apweiler R."/>
            <person name="Aturaliya R.N."/>
            <person name="Bailey T.L."/>
            <person name="Bansal M."/>
            <person name="Baxter L."/>
            <person name="Beisel K.W."/>
            <person name="Bersano T."/>
            <person name="Bono H."/>
            <person name="Chalk A.M."/>
            <person name="Chiu K.P."/>
            <person name="Choudhary V."/>
            <person name="Christoffels A."/>
            <person name="Clutterbuck D.R."/>
            <person name="Crowe M.L."/>
            <person name="Dalla E."/>
            <person name="Dalrymple B.P."/>
            <person name="de Bono B."/>
            <person name="Della Gatta G."/>
            <person name="di Bernardo D."/>
            <person name="Down T."/>
            <person name="Engstrom P."/>
            <person name="Fagiolini M."/>
            <person name="Faulkner G."/>
            <person name="Fletcher C.F."/>
            <person name="Fukushima T."/>
            <person name="Furuno M."/>
            <person name="Futaki S."/>
            <person name="Gariboldi M."/>
            <person name="Georgii-Hemming P."/>
            <person name="Gingeras T.R."/>
            <person name="Gojobori T."/>
            <person name="Green R.E."/>
            <person name="Gustincich S."/>
            <person name="Harbers M."/>
            <person name="Hayashi Y."/>
            <person name="Hensch T.K."/>
            <person name="Hirokawa N."/>
            <person name="Hill D."/>
            <person name="Huminiecki L."/>
            <person name="Iacono M."/>
            <person name="Ikeo K."/>
            <person name="Iwama A."/>
            <person name="Ishikawa T."/>
            <person name="Jakt M."/>
            <person name="Kanapin A."/>
            <person name="Katoh M."/>
            <person name="Kawasawa Y."/>
            <person name="Kelso J."/>
            <person name="Kitamura H."/>
            <person name="Kitano H."/>
            <person name="Kollias G."/>
            <person name="Krishnan S.P."/>
            <person name="Kruger A."/>
            <person name="Kummerfeld S.K."/>
            <person name="Kurochkin I.V."/>
            <person name="Lareau L.F."/>
            <person name="Lazarevic D."/>
            <person name="Lipovich L."/>
            <person name="Liu J."/>
            <person name="Liuni S."/>
            <person name="McWilliam S."/>
            <person name="Madan Babu M."/>
            <person name="Madera M."/>
            <person name="Marchionni L."/>
            <person name="Matsuda H."/>
            <person name="Matsuzawa S."/>
            <person name="Miki H."/>
            <person name="Mignone F."/>
            <person name="Miyake S."/>
            <person name="Morris K."/>
            <person name="Mottagui-Tabar S."/>
            <person name="Mulder N."/>
            <person name="Nakano N."/>
            <person name="Nakauchi H."/>
            <person name="Ng P."/>
            <person name="Nilsson R."/>
            <person name="Nishiguchi S."/>
            <person name="Nishikawa S."/>
            <person name="Nori F."/>
            <person name="Ohara O."/>
            <person name="Okazaki Y."/>
            <person name="Orlando V."/>
            <person name="Pang K.C."/>
            <person name="Pavan W.J."/>
            <person name="Pavesi G."/>
            <person name="Pesole G."/>
            <person name="Petrovsky N."/>
            <person name="Piazza S."/>
            <person name="Reed J."/>
            <person name="Reid J.F."/>
            <person name="Ring B.Z."/>
            <person name="Ringwald M."/>
            <person name="Rost B."/>
            <person name="Ruan Y."/>
            <person name="Salzberg S.L."/>
            <person name="Sandelin A."/>
            <person name="Schneider C."/>
            <person name="Schoenbach C."/>
            <person name="Sekiguchi K."/>
            <person name="Semple C.A."/>
            <person name="Seno S."/>
            <person name="Sessa L."/>
            <person name="Sheng Y."/>
            <person name="Shibata Y."/>
            <person name="Shimada H."/>
            <person name="Shimada K."/>
            <person name="Silva D."/>
            <person name="Sinclair B."/>
            <person name="Sperling S."/>
            <person name="Stupka E."/>
            <person name="Sugiura K."/>
            <person name="Sultana R."/>
            <person name="Takenaka Y."/>
            <person name="Taki K."/>
            <person name="Tammoja K."/>
            <person name="Tan S.L."/>
            <person name="Tang S."/>
            <person name="Taylor M.S."/>
            <person name="Tegner J."/>
            <person name="Teichmann S.A."/>
            <person name="Ueda H.R."/>
            <person name="van Nimwegen E."/>
            <person name="Verardo R."/>
            <person name="Wei C.L."/>
            <person name="Yagi K."/>
            <person name="Yamanishi H."/>
            <person name="Zabarovsky E."/>
            <person name="Zhu S."/>
            <person name="Zimmer A."/>
            <person name="Hide W."/>
            <person name="Bult C."/>
            <person name="Grimmond S.M."/>
            <person name="Teasdale R.D."/>
            <person name="Liu E.T."/>
            <person name="Brusic V."/>
            <person name="Quackenbush J."/>
            <person name="Wahlestedt C."/>
            <person name="Mattick J.S."/>
            <person name="Hume D.A."/>
            <person name="Kai C."/>
            <person name="Sasaki D."/>
            <person name="Tomaru Y."/>
            <person name="Fukuda S."/>
            <person name="Kanamori-Katayama M."/>
            <person name="Suzuki M."/>
            <person name="Aoki J."/>
            <person name="Arakawa T."/>
            <person name="Iida J."/>
            <person name="Imamura K."/>
            <person name="Itoh M."/>
            <person name="Kato T."/>
            <person name="Kawaji H."/>
            <person name="Kawagashira N."/>
            <person name="Kawashima T."/>
            <person name="Kojima M."/>
            <person name="Kondo S."/>
            <person name="Konno H."/>
            <person name="Nakano K."/>
            <person name="Ninomiya N."/>
            <person name="Nishio T."/>
            <person name="Okada M."/>
            <person name="Plessy C."/>
            <person name="Shibata K."/>
            <person name="Shiraki T."/>
            <person name="Suzuki S."/>
            <person name="Tagami M."/>
            <person name="Waki K."/>
            <person name="Watahiki A."/>
            <person name="Okamura-Oho Y."/>
            <person name="Suzuki H."/>
            <person name="Kawai J."/>
            <person name="Hayashizaki Y."/>
        </authorList>
    </citation>
    <scope>NUCLEOTIDE SEQUENCE [LARGE SCALE MRNA]</scope>
    <source>
        <strain>C57BL/6J</strain>
        <tissue>Adipose tissue</tissue>
        <tissue>Bone marrow</tissue>
        <tissue>Thymus</tissue>
    </source>
</reference>
<reference key="6">
    <citation type="journal article" date="2004" name="Genome Res.">
        <title>The status, quality, and expansion of the NIH full-length cDNA project: the Mammalian Gene Collection (MGC).</title>
        <authorList>
            <consortium name="The MGC Project Team"/>
        </authorList>
    </citation>
    <scope>NUCLEOTIDE SEQUENCE [LARGE SCALE MRNA]</scope>
    <source>
        <strain>C57BL/6J</strain>
        <tissue>Embryo</tissue>
    </source>
</reference>
<reference key="7">
    <citation type="journal article" date="2003" name="Nat. Immunol.">
        <title>TRAM is specifically involved in the Toll-like receptor 4-mediated MyD88-independent signaling pathway.</title>
        <authorList>
            <person name="Yamamoto M."/>
            <person name="Sato S."/>
            <person name="Hemmi H."/>
            <person name="Uematsu S."/>
            <person name="Hoshino K."/>
            <person name="Kaisho T."/>
            <person name="Takeuchi O."/>
            <person name="Takeda K."/>
            <person name="Akira S."/>
        </authorList>
    </citation>
    <scope>FUNCTION</scope>
</reference>
<reference key="8">
    <citation type="journal article" date="2008" name="Nat. Immunol.">
        <title>TRAM couples endocytosis of Toll-like receptor 4 to the induction of interferon-beta.</title>
        <authorList>
            <person name="Kagan J.C."/>
            <person name="Su T."/>
            <person name="Horng T."/>
            <person name="Chow A."/>
            <person name="Akira S."/>
            <person name="Medzhitov R."/>
        </authorList>
    </citation>
    <scope>FUNCTION</scope>
    <scope>SUBCELLULAR LOCATION</scope>
    <scope>MUTAGENESIS OF GLY-2; LYS-7; TRP-15 AND LYS-17</scope>
</reference>
<reference key="9">
    <citation type="journal article" date="2012" name="PLoS ONE">
        <title>TRAM is involved in IL-18 signaling and functions as a sorting adaptor for MyD88.</title>
        <authorList>
            <person name="Ohnishi H."/>
            <person name="Tochio H."/>
            <person name="Kato Z."/>
            <person name="Kawamoto N."/>
            <person name="Kimura T."/>
            <person name="Kubota K."/>
            <person name="Yamamoto T."/>
            <person name="Funasaka T."/>
            <person name="Nakano H."/>
            <person name="Wong R.W."/>
            <person name="Shirakawa M."/>
            <person name="Kondo N."/>
        </authorList>
    </citation>
    <scope>FUNCTION</scope>
</reference>
<accession>Q8BJQ4</accession>
<accession>Q3U996</accession>
<proteinExistence type="evidence at protein level"/>
<comment type="function">
    <text evidence="2 5 6 7">Functions as a sorting adapter in different signaling pathways to facilitate downstream signaling leading to type I interferon induction. In TLR4 signaling, physically bridges TLR4 and TICAM1 and functionally transmits signal to TICAM1 in early endosomes after endocytosis of TLR4. In TLR2 signaling, physically bridges TLR2 and MYD88 and is required for the TLR2-dependent movement of MYD88 to endosomes following ligand engagement. Involved in IL-18 signaling and is proposed to function as a sorting adapter for MYD88 in IL-18 signaling during adaptive immune response. Forms a complex with RAB11FIP2 that is recruited to the phagosomes to promote the activation of the actin-regulatory GTPases RAC1 and CDC42 and subsequent phagocytosis of Gram-negative bacteria.</text>
</comment>
<comment type="subunit">
    <text evidence="2">Homodimer. Interacts with TLR4, TICAM1, IRF3 and IRF7 in response to LPS. Interacts with IL1R1, IL1RAP, IRAK2, IRAK3 and TRAF6. Interacts with protein kinase-inactive mutants of IRAK1 and IRAK4. Isoform 1 interacts with isoform 2; the interaction occurs in late endosomes and disrupts the interaction between isoform 1 and TICAM1. Interacts with MYD88; the interaction decreases after IL-18 stimulation in a time-dependent manner. Interacts with IL18R1 and IL18RAP. Interacts with TLR2. Interacts with RAB11FIP2.</text>
</comment>
<comment type="subcellular location">
    <subcellularLocation>
        <location evidence="1">Cytoplasm</location>
    </subcellularLocation>
    <subcellularLocation>
        <location evidence="1">Golgi apparatus</location>
    </subcellularLocation>
    <subcellularLocation>
        <location evidence="6">Cell membrane</location>
    </subcellularLocation>
    <subcellularLocation>
        <location evidence="6">Early endosome</location>
    </subcellularLocation>
    <subcellularLocation>
        <location evidence="1">Late endosome</location>
    </subcellularLocation>
    <subcellularLocation>
        <location evidence="1">Endoplasmic reticulum</location>
    </subcellularLocation>
    <subcellularLocation>
        <location evidence="2">Cell projection</location>
        <location evidence="2">Phagocytic cup</location>
    </subcellularLocation>
    <text evidence="1">Localized to the plasma membrane as a result of myristoylation.</text>
</comment>
<comment type="domain">
    <text evidence="2">The TIR domain mediates the interaction with TRAF6 and MYD88.</text>
</comment>
<comment type="PTM">
    <text evidence="2">Myristoylated. Required for membrane association which is critical for its ability to initiate efficient signaling.</text>
</comment>
<comment type="PTM">
    <text evidence="2">Phosphorylated by PRKCE in response to LPS. Phosphorylation is essential for its function. It is depleted from the membrane upon phosphorylation. Tyrosine phosphorylation is inhibited by phosphatase PTPN4.</text>
</comment>
<gene>
    <name type="primary">Ticam2</name>
    <name type="synonym">Tirp</name>
    <name type="synonym">Tram</name>
</gene>
<protein>
    <recommendedName>
        <fullName>TIR domain-containing adapter molecule 2</fullName>
        <shortName>TICAM-2</shortName>
    </recommendedName>
    <alternativeName>
        <fullName>TRIF-related adapter molecule</fullName>
    </alternativeName>
    <alternativeName>
        <fullName>Toll/interleukin-1 receptor domain-containing protein</fullName>
    </alternativeName>
</protein>
<sequence>MGVGKSKLDKCPLSWHKKDSVDADQDGHESDSKNSEEACLRGFVEQSSGSEPPTGEQDQPEAKGAGPEEQDEEEFLKFVILHAEDDTDEALRVQDLLQNDFGIRPGIVFAEMPCGRLHLQNLDDAVNGSAWTILLLTENFLRDTWCNFQFYTSLMNSVSRQHKYNSVIPMRPLNSPLPRERTPLALQTINALEEESQGFSTQVERIFRESVFERQQSIWKETRSVSQKQFIA</sequence>
<keyword id="KW-1003">Cell membrane</keyword>
<keyword id="KW-0966">Cell projection</keyword>
<keyword id="KW-0963">Cytoplasm</keyword>
<keyword id="KW-0256">Endoplasmic reticulum</keyword>
<keyword id="KW-0967">Endosome</keyword>
<keyword id="KW-0333">Golgi apparatus</keyword>
<keyword id="KW-0391">Immunity</keyword>
<keyword id="KW-0395">Inflammatory response</keyword>
<keyword id="KW-0399">Innate immunity</keyword>
<keyword id="KW-0449">Lipoprotein</keyword>
<keyword id="KW-0472">Membrane</keyword>
<keyword id="KW-0519">Myristate</keyword>
<keyword id="KW-0597">Phosphoprotein</keyword>
<keyword id="KW-1185">Reference proteome</keyword>